<dbReference type="EMBL" id="BC055639">
    <property type="protein sequence ID" value="AAH55639.1"/>
    <property type="molecule type" value="mRNA"/>
</dbReference>
<dbReference type="RefSeq" id="NP_998576.1">
    <property type="nucleotide sequence ID" value="NM_213411.2"/>
</dbReference>
<dbReference type="SMR" id="Q7SXE4"/>
<dbReference type="FunCoup" id="Q7SXE4">
    <property type="interactions" value="1197"/>
</dbReference>
<dbReference type="STRING" id="7955.ENSDARP00000057385"/>
<dbReference type="PaxDb" id="7955-ENSDARP00000057385"/>
<dbReference type="GeneID" id="406720"/>
<dbReference type="KEGG" id="dre:406720"/>
<dbReference type="AGR" id="ZFIN:ZDB-GENE-040426-2749"/>
<dbReference type="CTD" id="9950"/>
<dbReference type="ZFIN" id="ZDB-GENE-040426-2749">
    <property type="gene designation" value="golga5"/>
</dbReference>
<dbReference type="eggNOG" id="KOG4677">
    <property type="taxonomic scope" value="Eukaryota"/>
</dbReference>
<dbReference type="InParanoid" id="Q7SXE4"/>
<dbReference type="OrthoDB" id="248903at2759"/>
<dbReference type="PhylomeDB" id="Q7SXE4"/>
<dbReference type="PRO" id="PR:Q7SXE4"/>
<dbReference type="Proteomes" id="UP000000437">
    <property type="component" value="Chromosome 13"/>
</dbReference>
<dbReference type="GO" id="GO:0005794">
    <property type="term" value="C:Golgi apparatus"/>
    <property type="evidence" value="ECO:0000250"/>
    <property type="project" value="UniProtKB"/>
</dbReference>
<dbReference type="GO" id="GO:0031985">
    <property type="term" value="C:Golgi cisterna"/>
    <property type="evidence" value="ECO:0000318"/>
    <property type="project" value="GO_Central"/>
</dbReference>
<dbReference type="GO" id="GO:0000139">
    <property type="term" value="C:Golgi membrane"/>
    <property type="evidence" value="ECO:0000318"/>
    <property type="project" value="GO_Central"/>
</dbReference>
<dbReference type="GO" id="GO:0042803">
    <property type="term" value="F:protein homodimerization activity"/>
    <property type="evidence" value="ECO:0000250"/>
    <property type="project" value="UniProtKB"/>
</dbReference>
<dbReference type="GO" id="GO:0007030">
    <property type="term" value="P:Golgi organization"/>
    <property type="evidence" value="ECO:0000250"/>
    <property type="project" value="UniProtKB"/>
</dbReference>
<dbReference type="GO" id="GO:0048193">
    <property type="term" value="P:Golgi vesicle transport"/>
    <property type="evidence" value="ECO:0000250"/>
    <property type="project" value="UniProtKB"/>
</dbReference>
<dbReference type="GO" id="GO:0000301">
    <property type="term" value="P:retrograde transport, vesicle recycling within Golgi"/>
    <property type="evidence" value="ECO:0000318"/>
    <property type="project" value="GO_Central"/>
</dbReference>
<dbReference type="InterPro" id="IPR019177">
    <property type="entry name" value="Golgin_subfamily_A_member_5"/>
</dbReference>
<dbReference type="PANTHER" id="PTHR13815:SF7">
    <property type="entry name" value="GOLGIN SUBFAMILY A MEMBER 5"/>
    <property type="match status" value="1"/>
</dbReference>
<dbReference type="PANTHER" id="PTHR13815">
    <property type="entry name" value="GOLGIN-84"/>
    <property type="match status" value="1"/>
</dbReference>
<dbReference type="Pfam" id="PF09787">
    <property type="entry name" value="Golgin_A5"/>
    <property type="match status" value="1"/>
</dbReference>
<sequence length="760" mass="84616">MSWFVDLAGKAEDFLNKVDQGAATALTKPNQKSSLSYNSPDATDSTQYNAAAYSSTQQHRDSISASSLGTSTFISAAAGNIKKSKATVLAGTANVSSTTPLGSSSKASSNFVRPRKSEVNDDLLFDFLNSSDPPQSEKKEVRRETVSKAFSPTGVSAQSQMPTVSLASDLHTGPSVTPTPSSTQGLSRNSSLGSLSSSSHSVKTEDSSTRDQSQADVPESLTAGLDDLADPQPVLEIQSQDLQQQQQQQGQEHVISNLRLENQLLRNEVSSLNQEMASLIQRAKDMQEEVNLGRARADKWNSDQSRVDRTVRELSSQVDDLTEALSAKDGQLAVLKVRLDEADQLLKARSSALEEAQNERVRILQDHSEGSSLHSQAVQTLQDRLRDAEAAVKREQESYRQIQSEFAARLAKVEAERQTLAESLTNAERRLTEEKQRAEDLQQQAKSSRSAAEYTKQELQDYKNKASRILQSKEKLINSLKEGSGLEVLEGAGAGVELEELRHEKELQREEIQKLQAQIQSLRTEIQDLETQALTENESWREQLAEVQEQHAQQIRAKQEIEAELERSKQELQYIEEEHHRTKITLQGRVKDREDEIQKLRNQLTNKALSNSSQAELEGRLHQLTETLIQKQTMLEALGTEKNSLVFQLERLEQQLKSLQGGQNSASHINMAAMEGPGARQRNTPILFSDGDGPGTGVYGKVRKAASTIDRFSIRLGIFLRRYPMARVFVIIYMALLHLWVMIVLLTYTPEMHHSHPDGR</sequence>
<organism>
    <name type="scientific">Danio rerio</name>
    <name type="common">Zebrafish</name>
    <name type="synonym">Brachydanio rerio</name>
    <dbReference type="NCBI Taxonomy" id="7955"/>
    <lineage>
        <taxon>Eukaryota</taxon>
        <taxon>Metazoa</taxon>
        <taxon>Chordata</taxon>
        <taxon>Craniata</taxon>
        <taxon>Vertebrata</taxon>
        <taxon>Euteleostomi</taxon>
        <taxon>Actinopterygii</taxon>
        <taxon>Neopterygii</taxon>
        <taxon>Teleostei</taxon>
        <taxon>Ostariophysi</taxon>
        <taxon>Cypriniformes</taxon>
        <taxon>Danionidae</taxon>
        <taxon>Danioninae</taxon>
        <taxon>Danio</taxon>
    </lineage>
</organism>
<gene>
    <name type="primary">golga5</name>
</gene>
<comment type="function">
    <text evidence="1">Involved in maintaining Golgi structure. Stimulates the formation of Golgi stacks and ribbons. Involved in intra-Golgi retrograde transport (By similarity).</text>
</comment>
<comment type="subcellular location">
    <subcellularLocation>
        <location evidence="1">Golgi apparatus membrane</location>
        <topology evidence="1">Single-pass type IV membrane protein</topology>
    </subcellularLocation>
</comment>
<evidence type="ECO:0000250" key="1"/>
<evidence type="ECO:0000255" key="2"/>
<evidence type="ECO:0000256" key="3">
    <source>
        <dbReference type="SAM" id="MobiDB-lite"/>
    </source>
</evidence>
<accession>Q7SXE4</accession>
<protein>
    <recommendedName>
        <fullName>Golgin subfamily A member 5</fullName>
    </recommendedName>
    <alternativeName>
        <fullName>Golgin-84</fullName>
    </alternativeName>
</protein>
<reference key="1">
    <citation type="submission" date="2003-08" db="EMBL/GenBank/DDBJ databases">
        <authorList>
            <consortium name="NIH - Zebrafish Gene Collection (ZGC) project"/>
        </authorList>
    </citation>
    <scope>NUCLEOTIDE SEQUENCE [LARGE SCALE MRNA]</scope>
</reference>
<keyword id="KW-0175">Coiled coil</keyword>
<keyword id="KW-0333">Golgi apparatus</keyword>
<keyword id="KW-0472">Membrane</keyword>
<keyword id="KW-1185">Reference proteome</keyword>
<keyword id="KW-0812">Transmembrane</keyword>
<keyword id="KW-1133">Transmembrane helix</keyword>
<feature type="chain" id="PRO_0000190064" description="Golgin subfamily A member 5">
    <location>
        <begin position="1"/>
        <end position="760"/>
    </location>
</feature>
<feature type="topological domain" description="Cytoplasmic" evidence="2">
    <location>
        <begin position="1"/>
        <end position="727"/>
    </location>
</feature>
<feature type="transmembrane region" description="Helical; Anchor for type IV membrane protein" evidence="2">
    <location>
        <begin position="728"/>
        <end position="748"/>
    </location>
</feature>
<feature type="topological domain" description="Extracellular" evidence="2">
    <location>
        <begin position="749"/>
        <end position="760"/>
    </location>
</feature>
<feature type="region of interest" description="Disordered" evidence="3">
    <location>
        <begin position="95"/>
        <end position="114"/>
    </location>
</feature>
<feature type="region of interest" description="Disordered" evidence="3">
    <location>
        <begin position="126"/>
        <end position="216"/>
    </location>
</feature>
<feature type="region of interest" description="Disordered" evidence="3">
    <location>
        <begin position="432"/>
        <end position="456"/>
    </location>
</feature>
<feature type="coiled-coil region" evidence="2">
    <location>
        <begin position="249"/>
        <end position="668"/>
    </location>
</feature>
<feature type="compositionally biased region" description="Polar residues" evidence="3">
    <location>
        <begin position="95"/>
        <end position="111"/>
    </location>
</feature>
<feature type="compositionally biased region" description="Basic and acidic residues" evidence="3">
    <location>
        <begin position="135"/>
        <end position="146"/>
    </location>
</feature>
<feature type="compositionally biased region" description="Polar residues" evidence="3">
    <location>
        <begin position="148"/>
        <end position="166"/>
    </location>
</feature>
<feature type="compositionally biased region" description="Low complexity" evidence="3">
    <location>
        <begin position="174"/>
        <end position="201"/>
    </location>
</feature>
<feature type="compositionally biased region" description="Polar residues" evidence="3">
    <location>
        <begin position="441"/>
        <end position="450"/>
    </location>
</feature>
<proteinExistence type="evidence at transcript level"/>
<name>GOGA5_DANRE</name>